<organism>
    <name type="scientific">Escherichia coli O17:K52:H18 (strain UMN026 / ExPEC)</name>
    <dbReference type="NCBI Taxonomy" id="585056"/>
    <lineage>
        <taxon>Bacteria</taxon>
        <taxon>Pseudomonadati</taxon>
        <taxon>Pseudomonadota</taxon>
        <taxon>Gammaproteobacteria</taxon>
        <taxon>Enterobacterales</taxon>
        <taxon>Enterobacteriaceae</taxon>
        <taxon>Escherichia</taxon>
    </lineage>
</organism>
<feature type="chain" id="PRO_1000188827" description="L-ribulose-5-phosphate 3-epimerase UlaE">
    <location>
        <begin position="1"/>
        <end position="284"/>
    </location>
</feature>
<name>ULAE_ECOLU</name>
<protein>
    <recommendedName>
        <fullName evidence="1">L-ribulose-5-phosphate 3-epimerase UlaE</fullName>
        <ecNumber evidence="1">5.1.3.22</ecNumber>
    </recommendedName>
    <alternativeName>
        <fullName evidence="1">L-ascorbate utilization protein E</fullName>
    </alternativeName>
    <alternativeName>
        <fullName evidence="1">L-xylulose-5-phosphate 3-epimerase</fullName>
    </alternativeName>
</protein>
<proteinExistence type="inferred from homology"/>
<sequence>MLSKQIPLGIYEKALPAGECWLERLQLAKTLGFDFVEMSVDETDDRLSRLDWSREQRLALVNAIVETGVRVPSMCLSAHRRFPLGSEDDAVRAQGLEIMRKAIQFAQDVGIRVIQLAGYDVYYQEANNETRRRFRDGLKESVEMASRAQVTLAMEIMDYPLMNSISKALGYTHYLNNPWFQLYPDIGNLSAWDNDVQMELQAGIGHIVAVHVKDTKPGVFKNVPFGEGVVDFERCFETLKQSGYCGPYLIEMWSETAEDPAAEVAKARDWVKARMAKAGMVEAA</sequence>
<evidence type="ECO:0000255" key="1">
    <source>
        <dbReference type="HAMAP-Rule" id="MF_01951"/>
    </source>
</evidence>
<comment type="function">
    <text evidence="1">Catalyzes the isomerization of L-xylulose-5-phosphate to L-ribulose-5-phosphate. Is involved in the anaerobic L-ascorbate utilization.</text>
</comment>
<comment type="catalytic activity">
    <reaction evidence="1">
        <text>L-ribulose 5-phosphate = L-xylulose 5-phosphate</text>
        <dbReference type="Rhea" id="RHEA:18497"/>
        <dbReference type="ChEBI" id="CHEBI:57829"/>
        <dbReference type="ChEBI" id="CHEBI:58226"/>
        <dbReference type="EC" id="5.1.3.22"/>
    </reaction>
</comment>
<comment type="pathway">
    <text evidence="1">Cofactor degradation; L-ascorbate degradation; D-xylulose 5-phosphate from L-ascorbate: step 3/4.</text>
</comment>
<comment type="induction">
    <text evidence="1">Induced by L-ascorbate. Repressed by UlaR.</text>
</comment>
<comment type="similarity">
    <text evidence="1">Belongs to the L-ribulose-5-phosphate 3-epimerase family.</text>
</comment>
<reference key="1">
    <citation type="journal article" date="2009" name="PLoS Genet.">
        <title>Organised genome dynamics in the Escherichia coli species results in highly diverse adaptive paths.</title>
        <authorList>
            <person name="Touchon M."/>
            <person name="Hoede C."/>
            <person name="Tenaillon O."/>
            <person name="Barbe V."/>
            <person name="Baeriswyl S."/>
            <person name="Bidet P."/>
            <person name="Bingen E."/>
            <person name="Bonacorsi S."/>
            <person name="Bouchier C."/>
            <person name="Bouvet O."/>
            <person name="Calteau A."/>
            <person name="Chiapello H."/>
            <person name="Clermont O."/>
            <person name="Cruveiller S."/>
            <person name="Danchin A."/>
            <person name="Diard M."/>
            <person name="Dossat C."/>
            <person name="Karoui M.E."/>
            <person name="Frapy E."/>
            <person name="Garry L."/>
            <person name="Ghigo J.M."/>
            <person name="Gilles A.M."/>
            <person name="Johnson J."/>
            <person name="Le Bouguenec C."/>
            <person name="Lescat M."/>
            <person name="Mangenot S."/>
            <person name="Martinez-Jehanne V."/>
            <person name="Matic I."/>
            <person name="Nassif X."/>
            <person name="Oztas S."/>
            <person name="Petit M.A."/>
            <person name="Pichon C."/>
            <person name="Rouy Z."/>
            <person name="Ruf C.S."/>
            <person name="Schneider D."/>
            <person name="Tourret J."/>
            <person name="Vacherie B."/>
            <person name="Vallenet D."/>
            <person name="Medigue C."/>
            <person name="Rocha E.P.C."/>
            <person name="Denamur E."/>
        </authorList>
    </citation>
    <scope>NUCLEOTIDE SEQUENCE [LARGE SCALE GENOMIC DNA]</scope>
    <source>
        <strain>UMN026 / ExPEC</strain>
    </source>
</reference>
<dbReference type="EC" id="5.1.3.22" evidence="1"/>
<dbReference type="EMBL" id="CU928163">
    <property type="protein sequence ID" value="CAR15843.1"/>
    <property type="molecule type" value="Genomic_DNA"/>
</dbReference>
<dbReference type="RefSeq" id="WP_000949501.1">
    <property type="nucleotide sequence ID" value="NC_011751.1"/>
</dbReference>
<dbReference type="RefSeq" id="YP_002415327.1">
    <property type="nucleotide sequence ID" value="NC_011751.1"/>
</dbReference>
<dbReference type="SMR" id="B7NGD1"/>
<dbReference type="STRING" id="585056.ECUMN_4730"/>
<dbReference type="KEGG" id="eum:ECUMN_4730"/>
<dbReference type="PATRIC" id="fig|585056.7.peg.4893"/>
<dbReference type="HOGENOM" id="CLU_082738_0_0_6"/>
<dbReference type="UniPathway" id="UPA00263">
    <property type="reaction ID" value="UER00379"/>
</dbReference>
<dbReference type="Proteomes" id="UP000007097">
    <property type="component" value="Chromosome"/>
</dbReference>
<dbReference type="GO" id="GO:0016861">
    <property type="term" value="F:intramolecular oxidoreductase activity, interconverting aldoses and ketoses"/>
    <property type="evidence" value="ECO:0007669"/>
    <property type="project" value="InterPro"/>
</dbReference>
<dbReference type="GO" id="GO:0034015">
    <property type="term" value="F:L-ribulose-5-phosphate 3-epimerase activity"/>
    <property type="evidence" value="ECO:0007669"/>
    <property type="project" value="UniProtKB-UniRule"/>
</dbReference>
<dbReference type="GO" id="GO:0019854">
    <property type="term" value="P:L-ascorbic acid catabolic process"/>
    <property type="evidence" value="ECO:0007669"/>
    <property type="project" value="UniProtKB-UniRule"/>
</dbReference>
<dbReference type="FunFam" id="3.20.20.150:FF:000003">
    <property type="entry name" value="L-ribulose-5-phosphate 3-epimerase UlaE"/>
    <property type="match status" value="1"/>
</dbReference>
<dbReference type="Gene3D" id="3.20.20.150">
    <property type="entry name" value="Divalent-metal-dependent TIM barrel enzymes"/>
    <property type="match status" value="1"/>
</dbReference>
<dbReference type="HAMAP" id="MF_01951">
    <property type="entry name" value="UlaE"/>
    <property type="match status" value="1"/>
</dbReference>
<dbReference type="InterPro" id="IPR004560">
    <property type="entry name" value="L-Ru-5P_3-Epase"/>
</dbReference>
<dbReference type="InterPro" id="IPR023492">
    <property type="entry name" value="L-Ru-5P_3-Epase_Enterobacteria"/>
</dbReference>
<dbReference type="InterPro" id="IPR050417">
    <property type="entry name" value="Sugar_Epim/Isomerase"/>
</dbReference>
<dbReference type="InterPro" id="IPR036237">
    <property type="entry name" value="Xyl_isomerase-like_sf"/>
</dbReference>
<dbReference type="InterPro" id="IPR013022">
    <property type="entry name" value="Xyl_isomerase-like_TIM-brl"/>
</dbReference>
<dbReference type="NCBIfam" id="TIGR00542">
    <property type="entry name" value="hxl6Piso_put"/>
    <property type="match status" value="1"/>
</dbReference>
<dbReference type="NCBIfam" id="NF009688">
    <property type="entry name" value="PRK13209.1"/>
    <property type="match status" value="1"/>
</dbReference>
<dbReference type="NCBIfam" id="NF009689">
    <property type="entry name" value="PRK13210.1"/>
    <property type="match status" value="1"/>
</dbReference>
<dbReference type="PANTHER" id="PTHR43489">
    <property type="entry name" value="ISOMERASE"/>
    <property type="match status" value="1"/>
</dbReference>
<dbReference type="PANTHER" id="PTHR43489:SF8">
    <property type="entry name" value="L-RIBULOSE-5-PHOSPHATE 3-EPIMERASE ULAE"/>
    <property type="match status" value="1"/>
</dbReference>
<dbReference type="Pfam" id="PF01261">
    <property type="entry name" value="AP_endonuc_2"/>
    <property type="match status" value="1"/>
</dbReference>
<dbReference type="SUPFAM" id="SSF51658">
    <property type="entry name" value="Xylose isomerase-like"/>
    <property type="match status" value="1"/>
</dbReference>
<accession>B7NGD1</accession>
<keyword id="KW-0413">Isomerase</keyword>
<gene>
    <name evidence="1" type="primary">ulaE</name>
    <name type="ordered locus">ECUMN_4730</name>
</gene>